<protein>
    <recommendedName>
        <fullName evidence="1">Large ribosomal subunit protein uL10</fullName>
    </recommendedName>
    <alternativeName>
        <fullName evidence="2">50S ribosomal protein L10</fullName>
    </alternativeName>
</protein>
<sequence>MLRSEKPVAVGDVVNIYKESPSIIITRYHGLTVSQVSSLRESLKSREAGFKVVKNTLAKIAAKQTGLDSIANLFAGPTAIVYSKEPVEMAKLVVNFAKSNGNLKIVGGIVDNRVLDEYSIKELSKLPSLNELRGKIVWLLQAPSTKVVGVLQAPSVSMARVLQAHASKN</sequence>
<proteinExistence type="inferred from homology"/>
<evidence type="ECO:0000255" key="1">
    <source>
        <dbReference type="HAMAP-Rule" id="MF_00362"/>
    </source>
</evidence>
<evidence type="ECO:0000305" key="2"/>
<gene>
    <name evidence="1" type="primary">rplJ</name>
    <name type="ordered locus">A1C_01000</name>
</gene>
<keyword id="KW-0687">Ribonucleoprotein</keyword>
<keyword id="KW-0689">Ribosomal protein</keyword>
<keyword id="KW-0694">RNA-binding</keyword>
<keyword id="KW-0699">rRNA-binding</keyword>
<organism>
    <name type="scientific">Rickettsia akari (strain Hartford)</name>
    <dbReference type="NCBI Taxonomy" id="293614"/>
    <lineage>
        <taxon>Bacteria</taxon>
        <taxon>Pseudomonadati</taxon>
        <taxon>Pseudomonadota</taxon>
        <taxon>Alphaproteobacteria</taxon>
        <taxon>Rickettsiales</taxon>
        <taxon>Rickettsiaceae</taxon>
        <taxon>Rickettsieae</taxon>
        <taxon>Rickettsia</taxon>
        <taxon>spotted fever group</taxon>
    </lineage>
</organism>
<accession>A8GMA5</accession>
<reference key="1">
    <citation type="submission" date="2007-09" db="EMBL/GenBank/DDBJ databases">
        <title>Complete genome sequence of Rickettsia akari.</title>
        <authorList>
            <person name="Madan A."/>
            <person name="Fahey J."/>
            <person name="Helton E."/>
            <person name="Ketteman M."/>
            <person name="Madan A."/>
            <person name="Rodrigues S."/>
            <person name="Sanchez A."/>
            <person name="Whiting M."/>
            <person name="Dasch G."/>
            <person name="Eremeeva M."/>
        </authorList>
    </citation>
    <scope>NUCLEOTIDE SEQUENCE [LARGE SCALE GENOMIC DNA]</scope>
    <source>
        <strain>Hartford</strain>
    </source>
</reference>
<feature type="chain" id="PRO_1000005578" description="Large ribosomal subunit protein uL10">
    <location>
        <begin position="1"/>
        <end position="169"/>
    </location>
</feature>
<dbReference type="EMBL" id="CP000847">
    <property type="protein sequence ID" value="ABV74530.1"/>
    <property type="molecule type" value="Genomic_DNA"/>
</dbReference>
<dbReference type="RefSeq" id="WP_012013400.1">
    <property type="nucleotide sequence ID" value="NC_009881.1"/>
</dbReference>
<dbReference type="SMR" id="A8GMA5"/>
<dbReference type="STRING" id="293614.A1C_01000"/>
<dbReference type="KEGG" id="rak:A1C_01000"/>
<dbReference type="eggNOG" id="COG0244">
    <property type="taxonomic scope" value="Bacteria"/>
</dbReference>
<dbReference type="HOGENOM" id="CLU_092227_0_0_5"/>
<dbReference type="Proteomes" id="UP000006830">
    <property type="component" value="Chromosome"/>
</dbReference>
<dbReference type="GO" id="GO:0015934">
    <property type="term" value="C:large ribosomal subunit"/>
    <property type="evidence" value="ECO:0007669"/>
    <property type="project" value="InterPro"/>
</dbReference>
<dbReference type="GO" id="GO:0070180">
    <property type="term" value="F:large ribosomal subunit rRNA binding"/>
    <property type="evidence" value="ECO:0007669"/>
    <property type="project" value="UniProtKB-UniRule"/>
</dbReference>
<dbReference type="GO" id="GO:0003735">
    <property type="term" value="F:structural constituent of ribosome"/>
    <property type="evidence" value="ECO:0007669"/>
    <property type="project" value="InterPro"/>
</dbReference>
<dbReference type="GO" id="GO:0006412">
    <property type="term" value="P:translation"/>
    <property type="evidence" value="ECO:0007669"/>
    <property type="project" value="UniProtKB-UniRule"/>
</dbReference>
<dbReference type="CDD" id="cd05797">
    <property type="entry name" value="Ribosomal_L10"/>
    <property type="match status" value="1"/>
</dbReference>
<dbReference type="Gene3D" id="3.30.70.1730">
    <property type="match status" value="1"/>
</dbReference>
<dbReference type="Gene3D" id="6.10.250.290">
    <property type="match status" value="1"/>
</dbReference>
<dbReference type="HAMAP" id="MF_00362">
    <property type="entry name" value="Ribosomal_uL10"/>
    <property type="match status" value="1"/>
</dbReference>
<dbReference type="InterPro" id="IPR001790">
    <property type="entry name" value="Ribosomal_uL10"/>
</dbReference>
<dbReference type="InterPro" id="IPR043141">
    <property type="entry name" value="Ribosomal_uL10-like_sf"/>
</dbReference>
<dbReference type="InterPro" id="IPR022973">
    <property type="entry name" value="Ribosomal_uL10_bac"/>
</dbReference>
<dbReference type="InterPro" id="IPR047865">
    <property type="entry name" value="Ribosomal_uL10_bac_type"/>
</dbReference>
<dbReference type="InterPro" id="IPR002363">
    <property type="entry name" value="Ribosomal_uL10_CS_bac"/>
</dbReference>
<dbReference type="NCBIfam" id="NF000955">
    <property type="entry name" value="PRK00099.1-1"/>
    <property type="match status" value="1"/>
</dbReference>
<dbReference type="PANTHER" id="PTHR11560">
    <property type="entry name" value="39S RIBOSOMAL PROTEIN L10, MITOCHONDRIAL"/>
    <property type="match status" value="1"/>
</dbReference>
<dbReference type="Pfam" id="PF00466">
    <property type="entry name" value="Ribosomal_L10"/>
    <property type="match status" value="1"/>
</dbReference>
<dbReference type="SUPFAM" id="SSF160369">
    <property type="entry name" value="Ribosomal protein L10-like"/>
    <property type="match status" value="1"/>
</dbReference>
<dbReference type="PROSITE" id="PS01109">
    <property type="entry name" value="RIBOSOMAL_L10"/>
    <property type="match status" value="1"/>
</dbReference>
<name>RL10_RICAH</name>
<comment type="function">
    <text evidence="1">Forms part of the ribosomal stalk, playing a central role in the interaction of the ribosome with GTP-bound translation factors.</text>
</comment>
<comment type="subunit">
    <text evidence="1">Part of the ribosomal stalk of the 50S ribosomal subunit. The N-terminus interacts with L11 and the large rRNA to form the base of the stalk. The C-terminus forms an elongated spine to which L12 dimers bind in a sequential fashion forming a multimeric L10(L12)X complex.</text>
</comment>
<comment type="similarity">
    <text evidence="1">Belongs to the universal ribosomal protein uL10 family.</text>
</comment>